<dbReference type="EC" id="4.1.1.19" evidence="1"/>
<dbReference type="EMBL" id="AM942759">
    <property type="protein sequence ID" value="CAR44185.1"/>
    <property type="molecule type" value="Genomic_DNA"/>
</dbReference>
<dbReference type="RefSeq" id="WP_004244147.1">
    <property type="nucleotide sequence ID" value="NC_010554.1"/>
</dbReference>
<dbReference type="SMR" id="B4F1A4"/>
<dbReference type="EnsemblBacteria" id="CAR44185">
    <property type="protein sequence ID" value="CAR44185"/>
    <property type="gene ID" value="PMI2094"/>
</dbReference>
<dbReference type="GeneID" id="6803159"/>
<dbReference type="KEGG" id="pmr:PMI2094"/>
<dbReference type="eggNOG" id="COG1166">
    <property type="taxonomic scope" value="Bacteria"/>
</dbReference>
<dbReference type="HOGENOM" id="CLU_027243_1_0_6"/>
<dbReference type="UniPathway" id="UPA00186">
    <property type="reaction ID" value="UER00284"/>
</dbReference>
<dbReference type="Proteomes" id="UP000008319">
    <property type="component" value="Chromosome"/>
</dbReference>
<dbReference type="GO" id="GO:0008792">
    <property type="term" value="F:arginine decarboxylase activity"/>
    <property type="evidence" value="ECO:0007669"/>
    <property type="project" value="UniProtKB-UniRule"/>
</dbReference>
<dbReference type="GO" id="GO:0046872">
    <property type="term" value="F:metal ion binding"/>
    <property type="evidence" value="ECO:0007669"/>
    <property type="project" value="UniProtKB-KW"/>
</dbReference>
<dbReference type="GO" id="GO:0006527">
    <property type="term" value="P:arginine catabolic process"/>
    <property type="evidence" value="ECO:0007669"/>
    <property type="project" value="InterPro"/>
</dbReference>
<dbReference type="GO" id="GO:0033388">
    <property type="term" value="P:putrescine biosynthetic process from arginine"/>
    <property type="evidence" value="ECO:0007669"/>
    <property type="project" value="TreeGrafter"/>
</dbReference>
<dbReference type="GO" id="GO:0008295">
    <property type="term" value="P:spermidine biosynthetic process"/>
    <property type="evidence" value="ECO:0007669"/>
    <property type="project" value="UniProtKB-UniRule"/>
</dbReference>
<dbReference type="CDD" id="cd06830">
    <property type="entry name" value="PLPDE_III_ADC"/>
    <property type="match status" value="1"/>
</dbReference>
<dbReference type="FunFam" id="1.10.287.3440:FF:000001">
    <property type="entry name" value="Biosynthetic arginine decarboxylase"/>
    <property type="match status" value="1"/>
</dbReference>
<dbReference type="FunFam" id="1.20.58.930:FF:000001">
    <property type="entry name" value="Biosynthetic arginine decarboxylase"/>
    <property type="match status" value="1"/>
</dbReference>
<dbReference type="FunFam" id="2.40.37.10:FF:000001">
    <property type="entry name" value="Biosynthetic arginine decarboxylase"/>
    <property type="match status" value="1"/>
</dbReference>
<dbReference type="FunFam" id="3.20.20.10:FF:000001">
    <property type="entry name" value="Biosynthetic arginine decarboxylase"/>
    <property type="match status" value="1"/>
</dbReference>
<dbReference type="Gene3D" id="1.10.287.3440">
    <property type="match status" value="1"/>
</dbReference>
<dbReference type="Gene3D" id="1.20.58.930">
    <property type="match status" value="1"/>
</dbReference>
<dbReference type="Gene3D" id="3.20.20.10">
    <property type="entry name" value="Alanine racemase"/>
    <property type="match status" value="1"/>
</dbReference>
<dbReference type="Gene3D" id="2.40.37.10">
    <property type="entry name" value="Lyase, Ornithine Decarboxylase, Chain A, domain 1"/>
    <property type="match status" value="1"/>
</dbReference>
<dbReference type="HAMAP" id="MF_01417">
    <property type="entry name" value="SpeA"/>
    <property type="match status" value="1"/>
</dbReference>
<dbReference type="InterPro" id="IPR009006">
    <property type="entry name" value="Ala_racemase/Decarboxylase_C"/>
</dbReference>
<dbReference type="InterPro" id="IPR040634">
    <property type="entry name" value="Arg_decarb_HB"/>
</dbReference>
<dbReference type="InterPro" id="IPR041128">
    <property type="entry name" value="Arg_decarbox_C"/>
</dbReference>
<dbReference type="InterPro" id="IPR002985">
    <property type="entry name" value="Arg_decrbxlase"/>
</dbReference>
<dbReference type="InterPro" id="IPR022657">
    <property type="entry name" value="De-COase2_CS"/>
</dbReference>
<dbReference type="InterPro" id="IPR022644">
    <property type="entry name" value="De-COase2_N"/>
</dbReference>
<dbReference type="InterPro" id="IPR022653">
    <property type="entry name" value="De-COase2_pyr-phos_BS"/>
</dbReference>
<dbReference type="InterPro" id="IPR000183">
    <property type="entry name" value="Orn/DAP/Arg_de-COase"/>
</dbReference>
<dbReference type="InterPro" id="IPR029066">
    <property type="entry name" value="PLP-binding_barrel"/>
</dbReference>
<dbReference type="NCBIfam" id="NF003763">
    <property type="entry name" value="PRK05354.1"/>
    <property type="match status" value="1"/>
</dbReference>
<dbReference type="NCBIfam" id="TIGR01273">
    <property type="entry name" value="speA"/>
    <property type="match status" value="1"/>
</dbReference>
<dbReference type="PANTHER" id="PTHR43295">
    <property type="entry name" value="ARGININE DECARBOXYLASE"/>
    <property type="match status" value="1"/>
</dbReference>
<dbReference type="PANTHER" id="PTHR43295:SF9">
    <property type="entry name" value="BIOSYNTHETIC ARGININE DECARBOXYLASE"/>
    <property type="match status" value="1"/>
</dbReference>
<dbReference type="Pfam" id="PF17810">
    <property type="entry name" value="Arg_decarb_HB"/>
    <property type="match status" value="1"/>
</dbReference>
<dbReference type="Pfam" id="PF17944">
    <property type="entry name" value="Arg_decarbox_C"/>
    <property type="match status" value="1"/>
</dbReference>
<dbReference type="Pfam" id="PF02784">
    <property type="entry name" value="Orn_Arg_deC_N"/>
    <property type="match status" value="1"/>
</dbReference>
<dbReference type="PIRSF" id="PIRSF001336">
    <property type="entry name" value="Arg_decrbxlase"/>
    <property type="match status" value="1"/>
</dbReference>
<dbReference type="PRINTS" id="PR01180">
    <property type="entry name" value="ARGDCRBXLASE"/>
</dbReference>
<dbReference type="PRINTS" id="PR01179">
    <property type="entry name" value="ODADCRBXLASE"/>
</dbReference>
<dbReference type="SUPFAM" id="SSF50621">
    <property type="entry name" value="Alanine racemase C-terminal domain-like"/>
    <property type="match status" value="1"/>
</dbReference>
<dbReference type="SUPFAM" id="SSF51419">
    <property type="entry name" value="PLP-binding barrel"/>
    <property type="match status" value="1"/>
</dbReference>
<dbReference type="PROSITE" id="PS00878">
    <property type="entry name" value="ODR_DC_2_1"/>
    <property type="match status" value="1"/>
</dbReference>
<dbReference type="PROSITE" id="PS00879">
    <property type="entry name" value="ODR_DC_2_2"/>
    <property type="match status" value="1"/>
</dbReference>
<evidence type="ECO:0000255" key="1">
    <source>
        <dbReference type="HAMAP-Rule" id="MF_01417"/>
    </source>
</evidence>
<gene>
    <name evidence="1" type="primary">speA</name>
    <name type="ordered locus">PMI2094</name>
</gene>
<accession>B4F1A4</accession>
<comment type="function">
    <text evidence="1">Catalyzes the biosynthesis of agmatine from arginine.</text>
</comment>
<comment type="catalytic activity">
    <reaction evidence="1">
        <text>L-arginine + H(+) = agmatine + CO2</text>
        <dbReference type="Rhea" id="RHEA:17641"/>
        <dbReference type="ChEBI" id="CHEBI:15378"/>
        <dbReference type="ChEBI" id="CHEBI:16526"/>
        <dbReference type="ChEBI" id="CHEBI:32682"/>
        <dbReference type="ChEBI" id="CHEBI:58145"/>
        <dbReference type="EC" id="4.1.1.19"/>
    </reaction>
</comment>
<comment type="cofactor">
    <cofactor evidence="1">
        <name>Mg(2+)</name>
        <dbReference type="ChEBI" id="CHEBI:18420"/>
    </cofactor>
</comment>
<comment type="cofactor">
    <cofactor evidence="1">
        <name>pyridoxal 5'-phosphate</name>
        <dbReference type="ChEBI" id="CHEBI:597326"/>
    </cofactor>
</comment>
<comment type="pathway">
    <text evidence="1">Amine and polyamine biosynthesis; agmatine biosynthesis; agmatine from L-arginine: step 1/1.</text>
</comment>
<comment type="similarity">
    <text evidence="1">Belongs to the Orn/Lys/Arg decarboxylase class-II family. SpeA subfamily.</text>
</comment>
<proteinExistence type="inferred from homology"/>
<name>SPEA_PROMH</name>
<protein>
    <recommendedName>
        <fullName evidence="1">Biosynthetic arginine decarboxylase</fullName>
        <shortName evidence="1">ADC</shortName>
        <ecNumber evidence="1">4.1.1.19</ecNumber>
    </recommendedName>
</protein>
<reference key="1">
    <citation type="journal article" date="2008" name="J. Bacteriol.">
        <title>Complete genome sequence of uropathogenic Proteus mirabilis, a master of both adherence and motility.</title>
        <authorList>
            <person name="Pearson M.M."/>
            <person name="Sebaihia M."/>
            <person name="Churcher C."/>
            <person name="Quail M.A."/>
            <person name="Seshasayee A.S."/>
            <person name="Luscombe N.M."/>
            <person name="Abdellah Z."/>
            <person name="Arrosmith C."/>
            <person name="Atkin B."/>
            <person name="Chillingworth T."/>
            <person name="Hauser H."/>
            <person name="Jagels K."/>
            <person name="Moule S."/>
            <person name="Mungall K."/>
            <person name="Norbertczak H."/>
            <person name="Rabbinowitsch E."/>
            <person name="Walker D."/>
            <person name="Whithead S."/>
            <person name="Thomson N.R."/>
            <person name="Rather P.N."/>
            <person name="Parkhill J."/>
            <person name="Mobley H.L.T."/>
        </authorList>
    </citation>
    <scope>NUCLEOTIDE SEQUENCE [LARGE SCALE GENOMIC DNA]</scope>
    <source>
        <strain>HI4320</strain>
    </source>
</reference>
<sequence>MNDNIARKMQQTYNITYWGGGYYCANNRGNISVCPNPDVPEATLDLTELVKQVQEEHSHLRLPALFCFPQILQHRLRSINAAFHRARESYGYKGDYFLVYPIKVNQQRRVIESLINAGEPLGLEAGSKAELMAVLAHANMTSSVIVCNGYKDREYIRLALTGEKLGHKVFLVIEKMSEIKMVLEEAERLEVIPRLGVRARLASQGSGKWQASGGEKSKFGLAATQVLQLIDTLRQAGRLDSLQLLHFHLGSQMANIRDIATGVRESARFYVELHKLGVNIQYFDVGGGLGVDYEGTRSQSDCSVNYGLNEYANNVIWAIGDACDENELPHPTVITESGRALTAHHTVLISNVIGVERNEFTAITPPAEDAPRPIASLWETWEEMQTKGNSRSLREWLHDSQLDLHDVHTQYVHGMLSLTERAWAEELYLNICRHIQYDLDPSNRAHRPIIDELQERMSDKFYVNFSLFQSLPDAWGIDQLFPVLPIEGLDKPLDRRAVLLDITCDSDGIIDHYVDGDGVETTMPMPAYDPEYPPMIGFFMVGAYQEILGNMHNLFGDTAAVDVYLDEKGNLTYQLSEEGDTVADMLQYVKLNPAVLLERFRTQVKNAQLDKALQEQFLTEFESGLYGYTYLEEEE</sequence>
<organism>
    <name type="scientific">Proteus mirabilis (strain HI4320)</name>
    <dbReference type="NCBI Taxonomy" id="529507"/>
    <lineage>
        <taxon>Bacteria</taxon>
        <taxon>Pseudomonadati</taxon>
        <taxon>Pseudomonadota</taxon>
        <taxon>Gammaproteobacteria</taxon>
        <taxon>Enterobacterales</taxon>
        <taxon>Morganellaceae</taxon>
        <taxon>Proteus</taxon>
    </lineage>
</organism>
<keyword id="KW-0210">Decarboxylase</keyword>
<keyword id="KW-0456">Lyase</keyword>
<keyword id="KW-0460">Magnesium</keyword>
<keyword id="KW-0479">Metal-binding</keyword>
<keyword id="KW-0620">Polyamine biosynthesis</keyword>
<keyword id="KW-0661">Putrescine biosynthesis</keyword>
<keyword id="KW-0663">Pyridoxal phosphate</keyword>
<keyword id="KW-1185">Reference proteome</keyword>
<keyword id="KW-0745">Spermidine biosynthesis</keyword>
<feature type="chain" id="PRO_1000145597" description="Biosynthetic arginine decarboxylase">
    <location>
        <begin position="1"/>
        <end position="635"/>
    </location>
</feature>
<feature type="binding site" evidence="1">
    <location>
        <begin position="283"/>
        <end position="293"/>
    </location>
    <ligand>
        <name>substrate</name>
    </ligand>
</feature>
<feature type="modified residue" description="N6-(pyridoxal phosphate)lysine" evidence="1">
    <location>
        <position position="103"/>
    </location>
</feature>